<name>CITG_ECO55</name>
<accession>B7L8J6</accession>
<evidence type="ECO:0000255" key="1">
    <source>
        <dbReference type="HAMAP-Rule" id="MF_00397"/>
    </source>
</evidence>
<dbReference type="EC" id="2.4.2.52" evidence="1"/>
<dbReference type="EMBL" id="CU928145">
    <property type="protein sequence ID" value="CAU96478.1"/>
    <property type="molecule type" value="Genomic_DNA"/>
</dbReference>
<dbReference type="RefSeq" id="WP_000062457.1">
    <property type="nucleotide sequence ID" value="NC_011748.1"/>
</dbReference>
<dbReference type="KEGG" id="eck:EC55989_0605"/>
<dbReference type="HOGENOM" id="CLU_056179_1_0_6"/>
<dbReference type="Proteomes" id="UP000000746">
    <property type="component" value="Chromosome"/>
</dbReference>
<dbReference type="GO" id="GO:0005524">
    <property type="term" value="F:ATP binding"/>
    <property type="evidence" value="ECO:0007669"/>
    <property type="project" value="UniProtKB-KW"/>
</dbReference>
<dbReference type="GO" id="GO:0046917">
    <property type="term" value="F:triphosphoribosyl-dephospho-CoA synthase activity"/>
    <property type="evidence" value="ECO:0007669"/>
    <property type="project" value="UniProtKB-UniRule"/>
</dbReference>
<dbReference type="GO" id="GO:0051191">
    <property type="term" value="P:prosthetic group biosynthetic process"/>
    <property type="evidence" value="ECO:0007669"/>
    <property type="project" value="TreeGrafter"/>
</dbReference>
<dbReference type="FunFam" id="1.10.4200.10:FF:000001">
    <property type="entry name" value="Triphosphoribosyl-dephospho-CoA synthase CitG"/>
    <property type="match status" value="1"/>
</dbReference>
<dbReference type="Gene3D" id="1.10.4200.10">
    <property type="entry name" value="Triphosphoribosyl-dephospho-CoA protein"/>
    <property type="match status" value="1"/>
</dbReference>
<dbReference type="HAMAP" id="MF_00397">
    <property type="entry name" value="CitG"/>
    <property type="match status" value="1"/>
</dbReference>
<dbReference type="InterPro" id="IPR002736">
    <property type="entry name" value="CitG"/>
</dbReference>
<dbReference type="InterPro" id="IPR017551">
    <property type="entry name" value="TriPribosyl-deP-CoA_syn_CitG"/>
</dbReference>
<dbReference type="NCBIfam" id="TIGR03125">
    <property type="entry name" value="citrate_citG"/>
    <property type="match status" value="1"/>
</dbReference>
<dbReference type="NCBIfam" id="NF007503">
    <property type="entry name" value="PRK10096.1"/>
    <property type="match status" value="1"/>
</dbReference>
<dbReference type="PANTHER" id="PTHR30201:SF2">
    <property type="entry name" value="2-(5''-TRIPHOSPHORIBOSYL)-3'-DEPHOSPHOCOENZYME-A SYNTHASE"/>
    <property type="match status" value="1"/>
</dbReference>
<dbReference type="PANTHER" id="PTHR30201">
    <property type="entry name" value="TRIPHOSPHORIBOSYL-DEPHOSPHO-COA SYNTHASE"/>
    <property type="match status" value="1"/>
</dbReference>
<dbReference type="Pfam" id="PF01874">
    <property type="entry name" value="CitG"/>
    <property type="match status" value="1"/>
</dbReference>
<protein>
    <recommendedName>
        <fullName evidence="1">2-(5''-triphosphoribosyl)-3'-dephosphocoenzyme-A synthase</fullName>
        <shortName evidence="1">2-(5''-triphosphoribosyl)-3'-dephospho-CoA synthase</shortName>
        <ecNumber evidence="1">2.4.2.52</ecNumber>
    </recommendedName>
</protein>
<feature type="chain" id="PRO_1000189585" description="2-(5''-triphosphoribosyl)-3'-dephosphocoenzyme-A synthase">
    <location>
        <begin position="1"/>
        <end position="292"/>
    </location>
</feature>
<keyword id="KW-0067">ATP-binding</keyword>
<keyword id="KW-0547">Nucleotide-binding</keyword>
<keyword id="KW-1185">Reference proteome</keyword>
<keyword id="KW-0808">Transferase</keyword>
<sequence length="292" mass="31644">MSMPATSTKTTKLATSLIDEYALLGWRAMLTEVNLSPKPGLVDRINCGAHKDMALEDFHRSALAIQGWLPRFIEFGACSAEMAPEAVLHGLRPIGMACEGDMFRATAGVNTHKGSIFSLGLLCAAIGRLLQLNQPVTPTTVCSTAASFCRGLTDRELRTNNSQLTAGQRLYQQLGLTGARGEAEAGYPLVINHALPHYLTLLDQGLDPELALLDTLLLLMAINGDTNVASRGGEGGLRWLQREAQTLLQKGGIRTPADLDYLRQFDRECIERNLSPGGSADLLILTWFLAQI</sequence>
<comment type="function">
    <text evidence="1">Catalyzes the formation of 2-(5''-triphosphoribosyl)-3'-dephosphocoenzyme-A, the precursor of the prosthetic group of the holo-acyl carrier protein (gamma chain) of citrate lyase, from ATP and dephospho-CoA.</text>
</comment>
<comment type="catalytic activity">
    <reaction evidence="1">
        <text>3'-dephospho-CoA + ATP = 2'-(5''-triphospho-alpha-D-ribosyl)-3'-dephospho-CoA + adenine</text>
        <dbReference type="Rhea" id="RHEA:15117"/>
        <dbReference type="ChEBI" id="CHEBI:16708"/>
        <dbReference type="ChEBI" id="CHEBI:30616"/>
        <dbReference type="ChEBI" id="CHEBI:57328"/>
        <dbReference type="ChEBI" id="CHEBI:61378"/>
        <dbReference type="EC" id="2.4.2.52"/>
    </reaction>
</comment>
<comment type="similarity">
    <text evidence="1">Belongs to the CitG/MdcB family.</text>
</comment>
<gene>
    <name evidence="1" type="primary">citG</name>
    <name type="ordered locus">EC55989_0605</name>
</gene>
<organism>
    <name type="scientific">Escherichia coli (strain 55989 / EAEC)</name>
    <dbReference type="NCBI Taxonomy" id="585055"/>
    <lineage>
        <taxon>Bacteria</taxon>
        <taxon>Pseudomonadati</taxon>
        <taxon>Pseudomonadota</taxon>
        <taxon>Gammaproteobacteria</taxon>
        <taxon>Enterobacterales</taxon>
        <taxon>Enterobacteriaceae</taxon>
        <taxon>Escherichia</taxon>
    </lineage>
</organism>
<reference key="1">
    <citation type="journal article" date="2009" name="PLoS Genet.">
        <title>Organised genome dynamics in the Escherichia coli species results in highly diverse adaptive paths.</title>
        <authorList>
            <person name="Touchon M."/>
            <person name="Hoede C."/>
            <person name="Tenaillon O."/>
            <person name="Barbe V."/>
            <person name="Baeriswyl S."/>
            <person name="Bidet P."/>
            <person name="Bingen E."/>
            <person name="Bonacorsi S."/>
            <person name="Bouchier C."/>
            <person name="Bouvet O."/>
            <person name="Calteau A."/>
            <person name="Chiapello H."/>
            <person name="Clermont O."/>
            <person name="Cruveiller S."/>
            <person name="Danchin A."/>
            <person name="Diard M."/>
            <person name="Dossat C."/>
            <person name="Karoui M.E."/>
            <person name="Frapy E."/>
            <person name="Garry L."/>
            <person name="Ghigo J.M."/>
            <person name="Gilles A.M."/>
            <person name="Johnson J."/>
            <person name="Le Bouguenec C."/>
            <person name="Lescat M."/>
            <person name="Mangenot S."/>
            <person name="Martinez-Jehanne V."/>
            <person name="Matic I."/>
            <person name="Nassif X."/>
            <person name="Oztas S."/>
            <person name="Petit M.A."/>
            <person name="Pichon C."/>
            <person name="Rouy Z."/>
            <person name="Ruf C.S."/>
            <person name="Schneider D."/>
            <person name="Tourret J."/>
            <person name="Vacherie B."/>
            <person name="Vallenet D."/>
            <person name="Medigue C."/>
            <person name="Rocha E.P.C."/>
            <person name="Denamur E."/>
        </authorList>
    </citation>
    <scope>NUCLEOTIDE SEQUENCE [LARGE SCALE GENOMIC DNA]</scope>
    <source>
        <strain>55989 / EAEC</strain>
    </source>
</reference>
<proteinExistence type="inferred from homology"/>